<reference key="1">
    <citation type="submission" date="2009-02" db="EMBL/GenBank/DDBJ databases">
        <title>Vibrio splendidus str. LGP32 complete genome.</title>
        <authorList>
            <person name="Mazel D."/>
            <person name="Le Roux F."/>
        </authorList>
    </citation>
    <scope>NUCLEOTIDE SEQUENCE [LARGE SCALE GENOMIC DNA]</scope>
    <source>
        <strain>LGP32</strain>
    </source>
</reference>
<name>LUXS_VIBA3</name>
<comment type="function">
    <text evidence="1">Involved in the synthesis of autoinducer 2 (AI-2) which is secreted by bacteria and is used to communicate both the cell density and the metabolic potential of the environment. The regulation of gene expression in response to changes in cell density is called quorum sensing. Catalyzes the transformation of S-ribosylhomocysteine (RHC) to homocysteine (HC) and 4,5-dihydroxy-2,3-pentadione (DPD).</text>
</comment>
<comment type="catalytic activity">
    <reaction evidence="1">
        <text>S-(5-deoxy-D-ribos-5-yl)-L-homocysteine = (S)-4,5-dihydroxypentane-2,3-dione + L-homocysteine</text>
        <dbReference type="Rhea" id="RHEA:17753"/>
        <dbReference type="ChEBI" id="CHEBI:29484"/>
        <dbReference type="ChEBI" id="CHEBI:58195"/>
        <dbReference type="ChEBI" id="CHEBI:58199"/>
        <dbReference type="EC" id="4.4.1.21"/>
    </reaction>
</comment>
<comment type="cofactor">
    <cofactor evidence="1">
        <name>Fe cation</name>
        <dbReference type="ChEBI" id="CHEBI:24875"/>
    </cofactor>
    <text evidence="1">Binds 1 Fe cation per subunit.</text>
</comment>
<comment type="subunit">
    <text evidence="1">Homodimer.</text>
</comment>
<comment type="similarity">
    <text evidence="1">Belongs to the LuxS family.</text>
</comment>
<proteinExistence type="inferred from homology"/>
<protein>
    <recommendedName>
        <fullName evidence="1">S-ribosylhomocysteine lyase</fullName>
        <ecNumber evidence="1">4.4.1.21</ecNumber>
    </recommendedName>
    <alternativeName>
        <fullName evidence="1">AI-2 synthesis protein</fullName>
    </alternativeName>
    <alternativeName>
        <fullName evidence="1">Autoinducer-2 production protein LuxS</fullName>
    </alternativeName>
</protein>
<gene>
    <name evidence="1" type="primary">luxS</name>
    <name type="ordered locus">VS_2562</name>
</gene>
<accession>B7VK33</accession>
<evidence type="ECO:0000255" key="1">
    <source>
        <dbReference type="HAMAP-Rule" id="MF_00091"/>
    </source>
</evidence>
<organism>
    <name type="scientific">Vibrio atlanticus (strain LGP32)</name>
    <name type="common">Vibrio splendidus (strain Mel32)</name>
    <dbReference type="NCBI Taxonomy" id="575788"/>
    <lineage>
        <taxon>Bacteria</taxon>
        <taxon>Pseudomonadati</taxon>
        <taxon>Pseudomonadota</taxon>
        <taxon>Gammaproteobacteria</taxon>
        <taxon>Vibrionales</taxon>
        <taxon>Vibrionaceae</taxon>
        <taxon>Vibrio</taxon>
    </lineage>
</organism>
<feature type="chain" id="PRO_1000191047" description="S-ribosylhomocysteine lyase">
    <location>
        <begin position="1"/>
        <end position="172"/>
    </location>
</feature>
<feature type="binding site" evidence="1">
    <location>
        <position position="54"/>
    </location>
    <ligand>
        <name>Fe cation</name>
        <dbReference type="ChEBI" id="CHEBI:24875"/>
    </ligand>
</feature>
<feature type="binding site" evidence="1">
    <location>
        <position position="58"/>
    </location>
    <ligand>
        <name>Fe cation</name>
        <dbReference type="ChEBI" id="CHEBI:24875"/>
    </ligand>
</feature>
<feature type="binding site" evidence="1">
    <location>
        <position position="128"/>
    </location>
    <ligand>
        <name>Fe cation</name>
        <dbReference type="ChEBI" id="CHEBI:24875"/>
    </ligand>
</feature>
<keyword id="KW-0071">Autoinducer synthesis</keyword>
<keyword id="KW-0408">Iron</keyword>
<keyword id="KW-0456">Lyase</keyword>
<keyword id="KW-0479">Metal-binding</keyword>
<keyword id="KW-0673">Quorum sensing</keyword>
<sequence>MPLLDSFTVDHTRMNAPAVRVAKTMQTPKGDTITVFDLRFTAPNKDILSERGIHTLEHLYAGFMRAHLNGSAVEIIDISPMGCRTGFYMSLIGTPSEQQVAEAWLAAMQDVLKVENQNKIPELNEYQCGTAAMHSLDEAKEIANAIIAAGISVNKNDELALPESMLQELKID</sequence>
<dbReference type="EC" id="4.4.1.21" evidence="1"/>
<dbReference type="EMBL" id="FM954972">
    <property type="protein sequence ID" value="CAV19744.1"/>
    <property type="molecule type" value="Genomic_DNA"/>
</dbReference>
<dbReference type="SMR" id="B7VK33"/>
<dbReference type="STRING" id="575788.VS_2562"/>
<dbReference type="KEGG" id="vsp:VS_2562"/>
<dbReference type="PATRIC" id="fig|575788.5.peg.3821"/>
<dbReference type="eggNOG" id="COG1854">
    <property type="taxonomic scope" value="Bacteria"/>
</dbReference>
<dbReference type="HOGENOM" id="CLU_107531_2_0_6"/>
<dbReference type="Proteomes" id="UP000009100">
    <property type="component" value="Chromosome 1"/>
</dbReference>
<dbReference type="GO" id="GO:0005506">
    <property type="term" value="F:iron ion binding"/>
    <property type="evidence" value="ECO:0007669"/>
    <property type="project" value="InterPro"/>
</dbReference>
<dbReference type="GO" id="GO:0043768">
    <property type="term" value="F:S-ribosylhomocysteine lyase activity"/>
    <property type="evidence" value="ECO:0007669"/>
    <property type="project" value="UniProtKB-UniRule"/>
</dbReference>
<dbReference type="GO" id="GO:0009372">
    <property type="term" value="P:quorum sensing"/>
    <property type="evidence" value="ECO:0007669"/>
    <property type="project" value="UniProtKB-UniRule"/>
</dbReference>
<dbReference type="FunFam" id="3.30.1360.80:FF:000001">
    <property type="entry name" value="S-ribosylhomocysteine lyase"/>
    <property type="match status" value="1"/>
</dbReference>
<dbReference type="Gene3D" id="3.30.1360.80">
    <property type="entry name" value="S-ribosylhomocysteinase (LuxS)"/>
    <property type="match status" value="1"/>
</dbReference>
<dbReference type="HAMAP" id="MF_00091">
    <property type="entry name" value="LuxS"/>
    <property type="match status" value="1"/>
</dbReference>
<dbReference type="InterPro" id="IPR037005">
    <property type="entry name" value="LuxS_sf"/>
</dbReference>
<dbReference type="InterPro" id="IPR011249">
    <property type="entry name" value="Metalloenz_LuxS/M16"/>
</dbReference>
<dbReference type="InterPro" id="IPR003815">
    <property type="entry name" value="S-ribosylhomocysteinase"/>
</dbReference>
<dbReference type="NCBIfam" id="NF002602">
    <property type="entry name" value="PRK02260.1-2"/>
    <property type="match status" value="1"/>
</dbReference>
<dbReference type="PANTHER" id="PTHR35799">
    <property type="entry name" value="S-RIBOSYLHOMOCYSTEINE LYASE"/>
    <property type="match status" value="1"/>
</dbReference>
<dbReference type="PANTHER" id="PTHR35799:SF1">
    <property type="entry name" value="S-RIBOSYLHOMOCYSTEINE LYASE"/>
    <property type="match status" value="1"/>
</dbReference>
<dbReference type="Pfam" id="PF02664">
    <property type="entry name" value="LuxS"/>
    <property type="match status" value="1"/>
</dbReference>
<dbReference type="PIRSF" id="PIRSF006160">
    <property type="entry name" value="AI2"/>
    <property type="match status" value="1"/>
</dbReference>
<dbReference type="PRINTS" id="PR01487">
    <property type="entry name" value="LUXSPROTEIN"/>
</dbReference>
<dbReference type="SUPFAM" id="SSF63411">
    <property type="entry name" value="LuxS/MPP-like metallohydrolase"/>
    <property type="match status" value="1"/>
</dbReference>